<name>FTMB_NEOFI</name>
<evidence type="ECO:0000250" key="1">
    <source>
        <dbReference type="UniProtKB" id="Q4WAW7"/>
    </source>
</evidence>
<evidence type="ECO:0000269" key="2">
    <source>
    </source>
</evidence>
<evidence type="ECO:0000303" key="3">
    <source>
    </source>
</evidence>
<evidence type="ECO:0000305" key="4"/>
<protein>
    <recommendedName>
        <fullName evidence="3">Tryprostatin B synthase</fullName>
        <ecNumber evidence="1">2.5.1.106</ecNumber>
    </recommendedName>
    <alternativeName>
        <fullName evidence="3">Brevianamide F prenyltransferase</fullName>
    </alternativeName>
    <alternativeName>
        <fullName>Fumitremorgin biosynthesis protein B</fullName>
    </alternativeName>
</protein>
<keyword id="KW-0017">Alkaloid metabolism</keyword>
<keyword id="KW-0637">Prenyltransferase</keyword>
<keyword id="KW-1185">Reference proteome</keyword>
<keyword id="KW-0808">Transferase</keyword>
<accession>A1DA62</accession>
<dbReference type="EC" id="2.5.1.106" evidence="1"/>
<dbReference type="EMBL" id="DS027694">
    <property type="protein sequence ID" value="EAW19752.1"/>
    <property type="status" value="ALT_INIT"/>
    <property type="molecule type" value="Genomic_DNA"/>
</dbReference>
<dbReference type="RefSeq" id="XP_001261649.1">
    <property type="nucleotide sequence ID" value="XM_001261648.1"/>
</dbReference>
<dbReference type="SMR" id="A1DA62"/>
<dbReference type="STRING" id="331117.A1DA62"/>
<dbReference type="MEROPS" id="M77.004"/>
<dbReference type="EnsemblFungi" id="EAW19752">
    <property type="protein sequence ID" value="EAW19752"/>
    <property type="gene ID" value="NFIA_093720"/>
</dbReference>
<dbReference type="GeneID" id="4588682"/>
<dbReference type="KEGG" id="nfi:NFIA_093720"/>
<dbReference type="VEuPathDB" id="FungiDB:NFIA_093720"/>
<dbReference type="eggNOG" id="ENOG502S2XP">
    <property type="taxonomic scope" value="Eukaryota"/>
</dbReference>
<dbReference type="OrthoDB" id="5392033at2759"/>
<dbReference type="Proteomes" id="UP000006702">
    <property type="component" value="Unassembled WGS sequence"/>
</dbReference>
<dbReference type="GO" id="GO:0004659">
    <property type="term" value="F:prenyltransferase activity"/>
    <property type="evidence" value="ECO:0007669"/>
    <property type="project" value="UniProtKB-KW"/>
</dbReference>
<dbReference type="GO" id="GO:0009820">
    <property type="term" value="P:alkaloid metabolic process"/>
    <property type="evidence" value="ECO:0007669"/>
    <property type="project" value="UniProtKB-KW"/>
</dbReference>
<dbReference type="CDD" id="cd13929">
    <property type="entry name" value="PT-DMATS_CymD"/>
    <property type="match status" value="1"/>
</dbReference>
<dbReference type="InterPro" id="IPR033964">
    <property type="entry name" value="Aro_prenylTrfase"/>
</dbReference>
<dbReference type="InterPro" id="IPR017795">
    <property type="entry name" value="Aro_prenylTrfase_DMATS"/>
</dbReference>
<dbReference type="InterPro" id="IPR012148">
    <property type="entry name" value="DMATS-type_fun"/>
</dbReference>
<dbReference type="NCBIfam" id="TIGR03429">
    <property type="entry name" value="arom_pren_DMATS"/>
    <property type="match status" value="1"/>
</dbReference>
<dbReference type="PANTHER" id="PTHR40627">
    <property type="entry name" value="INDOLE PRENYLTRANSFERASE TDIB-RELATED"/>
    <property type="match status" value="1"/>
</dbReference>
<dbReference type="PANTHER" id="PTHR40627:SF3">
    <property type="entry name" value="PRENYLTRANSFERASE ASQH2-RELATED"/>
    <property type="match status" value="1"/>
</dbReference>
<dbReference type="Pfam" id="PF11991">
    <property type="entry name" value="Trp_DMAT"/>
    <property type="match status" value="1"/>
</dbReference>
<dbReference type="PIRSF" id="PIRSF000509">
    <property type="entry name" value="Trp_DMAT"/>
    <property type="match status" value="1"/>
</dbReference>
<dbReference type="SFLD" id="SFLDS00036">
    <property type="entry name" value="Aromatic_Prenyltransferase"/>
    <property type="match status" value="1"/>
</dbReference>
<dbReference type="SFLD" id="SFLDG01162">
    <property type="entry name" value="I"/>
    <property type="match status" value="1"/>
</dbReference>
<organism>
    <name type="scientific">Neosartorya fischeri (strain ATCC 1020 / DSM 3700 / CBS 544.65 / FGSC A1164 / JCM 1740 / NRRL 181 / WB 181)</name>
    <name type="common">Aspergillus fischerianus</name>
    <dbReference type="NCBI Taxonomy" id="331117"/>
    <lineage>
        <taxon>Eukaryota</taxon>
        <taxon>Fungi</taxon>
        <taxon>Dikarya</taxon>
        <taxon>Ascomycota</taxon>
        <taxon>Pezizomycotina</taxon>
        <taxon>Eurotiomycetes</taxon>
        <taxon>Eurotiomycetidae</taxon>
        <taxon>Eurotiales</taxon>
        <taxon>Aspergillaceae</taxon>
        <taxon>Aspergillus</taxon>
        <taxon>Aspergillus subgen. Fumigati</taxon>
    </lineage>
</organism>
<reference key="1">
    <citation type="journal article" date="2008" name="PLoS Genet.">
        <title>Genomic islands in the pathogenic filamentous fungus Aspergillus fumigatus.</title>
        <authorList>
            <person name="Fedorova N.D."/>
            <person name="Khaldi N."/>
            <person name="Joardar V.S."/>
            <person name="Maiti R."/>
            <person name="Amedeo P."/>
            <person name="Anderson M.J."/>
            <person name="Crabtree J."/>
            <person name="Silva J.C."/>
            <person name="Badger J.H."/>
            <person name="Albarraq A."/>
            <person name="Angiuoli S."/>
            <person name="Bussey H."/>
            <person name="Bowyer P."/>
            <person name="Cotty P.J."/>
            <person name="Dyer P.S."/>
            <person name="Egan A."/>
            <person name="Galens K."/>
            <person name="Fraser-Liggett C.M."/>
            <person name="Haas B.J."/>
            <person name="Inman J.M."/>
            <person name="Kent R."/>
            <person name="Lemieux S."/>
            <person name="Malavazi I."/>
            <person name="Orvis J."/>
            <person name="Roemer T."/>
            <person name="Ronning C.M."/>
            <person name="Sundaram J.P."/>
            <person name="Sutton G."/>
            <person name="Turner G."/>
            <person name="Venter J.C."/>
            <person name="White O.R."/>
            <person name="Whitty B.R."/>
            <person name="Youngman P."/>
            <person name="Wolfe K.H."/>
            <person name="Goldman G.H."/>
            <person name="Wortman J.R."/>
            <person name="Jiang B."/>
            <person name="Denning D.W."/>
            <person name="Nierman W.C."/>
        </authorList>
    </citation>
    <scope>NUCLEOTIDE SEQUENCE [LARGE SCALE GENOMIC DNA]</scope>
    <source>
        <strain>ATCC 1020 / DSM 3700 / CBS 544.65 / FGSC A1164 / JCM 1740 / NRRL 181 / WB 181</strain>
    </source>
</reference>
<reference key="2">
    <citation type="journal article" date="2012" name="ChemBioChem">
        <title>Identification of the verruculogen prenyltransferase FtmPT3 by a combination of chemical, bioinformatic and biochemical approaches.</title>
        <authorList>
            <person name="Mundt K."/>
            <person name="Wollinsky B."/>
            <person name="Ruan H.L."/>
            <person name="Zhu T."/>
            <person name="Li S.M."/>
        </authorList>
    </citation>
    <scope>FUNCTION</scope>
</reference>
<feature type="chain" id="PRO_0000424113" description="Tryprostatin B synthase">
    <location>
        <begin position="1"/>
        <end position="463"/>
    </location>
</feature>
<feature type="binding site" evidence="1">
    <location>
        <position position="93"/>
    </location>
    <ligand>
        <name>brevianamide F</name>
        <dbReference type="ChEBI" id="CHEBI:64530"/>
    </ligand>
</feature>
<feature type="binding site" evidence="1">
    <location>
        <position position="101"/>
    </location>
    <ligand>
        <name>brevianamide F</name>
        <dbReference type="ChEBI" id="CHEBI:64530"/>
    </ligand>
</feature>
<feature type="binding site" evidence="1">
    <location>
        <position position="112"/>
    </location>
    <ligand>
        <name>dimethylallyl diphosphate</name>
        <dbReference type="ChEBI" id="CHEBI:57623"/>
    </ligand>
</feature>
<feature type="binding site" evidence="1">
    <location>
        <position position="200"/>
    </location>
    <ligand>
        <name>dimethylallyl diphosphate</name>
        <dbReference type="ChEBI" id="CHEBI:57623"/>
    </ligand>
</feature>
<feature type="binding site" evidence="1">
    <location>
        <position position="202"/>
    </location>
    <ligand>
        <name>dimethylallyl diphosphate</name>
        <dbReference type="ChEBI" id="CHEBI:57623"/>
    </ligand>
</feature>
<feature type="binding site" evidence="1">
    <location>
        <position position="204"/>
    </location>
    <ligand>
        <name>brevianamide F</name>
        <dbReference type="ChEBI" id="CHEBI:64530"/>
    </ligand>
</feature>
<feature type="binding site" evidence="1">
    <location>
        <position position="293"/>
    </location>
    <ligand>
        <name>dimethylallyl diphosphate</name>
        <dbReference type="ChEBI" id="CHEBI:57623"/>
    </ligand>
</feature>
<feature type="binding site" evidence="1">
    <location>
        <position position="295"/>
    </location>
    <ligand>
        <name>dimethylallyl diphosphate</name>
        <dbReference type="ChEBI" id="CHEBI:57623"/>
    </ligand>
</feature>
<feature type="binding site" evidence="1">
    <location>
        <position position="379"/>
    </location>
    <ligand>
        <name>dimethylallyl diphosphate</name>
        <dbReference type="ChEBI" id="CHEBI:57623"/>
    </ligand>
</feature>
<feature type="binding site" evidence="1">
    <location>
        <position position="381"/>
    </location>
    <ligand>
        <name>dimethylallyl diphosphate</name>
        <dbReference type="ChEBI" id="CHEBI:57623"/>
    </ligand>
</feature>
<feature type="binding site" evidence="1">
    <location>
        <position position="445"/>
    </location>
    <ligand>
        <name>dimethylallyl diphosphate</name>
        <dbReference type="ChEBI" id="CHEBI:57623"/>
    </ligand>
</feature>
<feature type="binding site" evidence="1">
    <location>
        <position position="449"/>
    </location>
    <ligand>
        <name>dimethylallyl diphosphate</name>
        <dbReference type="ChEBI" id="CHEBI:57623"/>
    </ligand>
</feature>
<feature type="site" description="Required for regioselectivity" evidence="1">
    <location>
        <position position="114"/>
    </location>
</feature>
<gene>
    <name evidence="3" type="primary">ftmPT1</name>
    <name evidence="1" type="synonym">ftmB</name>
    <name type="ORF">NFIA_093720</name>
</gene>
<proteinExistence type="inferred from homology"/>
<comment type="function">
    <text evidence="1 2">Brevianamide F prenyltransferase; part of the gene cluster that mediates the biosynthesis of fumitremorgins, indole alkaloids that carry not only intriguing chemical structures, but also interesting biological and pharmacological activities (PubMed:23109474). The biosynthesis of fumitremorgin-type alkaloids begins by condensation of the two amino acids L-tryptophan and L-proline to brevianamide F, catalyzed by the non-ribosomal peptide synthetase ftmPS/ftmA (By similarity). Brevianamide F is then prenylated by the prenyltransferase ftmPT1/ftmB in the presence of dimethylallyl diphosphate, resulting in the formation of tryprostatin B (By similarity). The three cytochrome P450 monooxygenases, ftmP450-1/ftmC, ftmP450-2/ftmE and ftmP450-3/FtmG, are responsible for the conversion of tryprostatin B to 6-hydroxytryprostatin B, tryprostatin A to fumitremorgin C and fumitremorgin C to 12,13-dihydroxyfumitremorgin C, respectively (By similarity). The putative methyltransferase ftmMT/ftmD is expected for the conversion of 6-hydroxytryprostatin B to tryprostatin A (By similarity). FtmPT2/FtmH catalyzes the prenylation of 12,13-dihydroxyfumitre-morgin C in the presence of dimethylallyl diphosphate, resulting in the formation of fumitremorgin B (By similarity). Fumitremorgin B is further converted to verruculogen by ftmOx1/ftmF via the insertion of an endoperoxide bond between the two prenyl moieties (By similarity). Finally, verruculogen is further converted to fumitremorgin A by the verruculogen prenyltransferase ftmPT3 (PubMed:23109474).</text>
</comment>
<comment type="catalytic activity">
    <reaction evidence="1">
        <text>brevianamide F + dimethylallyl diphosphate = tryprostatin B + diphosphate</text>
        <dbReference type="Rhea" id="RHEA:35939"/>
        <dbReference type="ChEBI" id="CHEBI:33019"/>
        <dbReference type="ChEBI" id="CHEBI:57623"/>
        <dbReference type="ChEBI" id="CHEBI:64530"/>
        <dbReference type="ChEBI" id="CHEBI:72760"/>
        <dbReference type="EC" id="2.5.1.106"/>
    </reaction>
</comment>
<comment type="pathway">
    <text evidence="1">Mycotoxin biosynthesis.</text>
</comment>
<comment type="similarity">
    <text evidence="4">Belongs to the tryptophan dimethylallyltransferase family.</text>
</comment>
<comment type="sequence caution" evidence="4">
    <conflict type="erroneous initiation">
        <sequence resource="EMBL-CDS" id="EAW19752"/>
    </conflict>
    <text>Extended N-terminus.</text>
</comment>
<sequence>MPPAPPDQKPCHLQPAPYRALSETILFGSLNEERWWHSTAPILSRLLISSNYDVDVQYKYLSLYRHLVLPALGPYPQRDPETGIIATQWRSGMVLTGLPIEFSNNVARALIRIGVDPVTADSGTAQDPFNTARPKGYLETAARLLPGVDLTRFYEFETELVITKEEEAVLQANPDLFKSPWKSQILTAMDLQKSGTVLVKAYFYPQPKSAVTGRSTEELLVNAIRKVDRESRFETQLANLERYMERRRRGLHVPVVTADKPPPTEADKTFDACSFFPHFLSTDLVEPGKSRVKFYASERHVNLKMVEDIWTFGGLRRDPDALKGLELLRHFWADIQMREGYYTMPRGFCELGKSSAGFEAPMMFHFHLDGSQSPFPDPQMYVCVFGMNSRKLVEGLTTFYRRLGWEDMASHYQGNFLANYPDEDFEKAAHLCAYVSFAYKDGGAYVTLYNHSFNPLGDVALAN</sequence>